<evidence type="ECO:0000255" key="1">
    <source>
        <dbReference type="HAMAP-Rule" id="MF_00052"/>
    </source>
</evidence>
<evidence type="ECO:0000255" key="2">
    <source>
        <dbReference type="PROSITE-ProRule" id="PRU01319"/>
    </source>
</evidence>
<keyword id="KW-0963">Cytoplasm</keyword>
<keyword id="KW-0255">Endonuclease</keyword>
<keyword id="KW-0378">Hydrolase</keyword>
<keyword id="KW-0464">Manganese</keyword>
<keyword id="KW-0479">Metal-binding</keyword>
<keyword id="KW-0540">Nuclease</keyword>
<comment type="function">
    <text evidence="1">Endonuclease that specifically degrades the RNA of RNA-DNA hybrids.</text>
</comment>
<comment type="catalytic activity">
    <reaction evidence="1">
        <text>Endonucleolytic cleavage to 5'-phosphomonoester.</text>
        <dbReference type="EC" id="3.1.26.4"/>
    </reaction>
</comment>
<comment type="cofactor">
    <cofactor evidence="1">
        <name>Mn(2+)</name>
        <dbReference type="ChEBI" id="CHEBI:29035"/>
    </cofactor>
    <cofactor evidence="1">
        <name>Mg(2+)</name>
        <dbReference type="ChEBI" id="CHEBI:18420"/>
    </cofactor>
    <text evidence="1">Manganese or magnesium. Binds 1 divalent metal ion per monomer in the absence of substrate. May bind a second metal ion after substrate binding.</text>
</comment>
<comment type="subcellular location">
    <subcellularLocation>
        <location evidence="1">Cytoplasm</location>
    </subcellularLocation>
</comment>
<comment type="similarity">
    <text evidence="1">Belongs to the RNase HII family.</text>
</comment>
<gene>
    <name evidence="1" type="primary">rnhB</name>
    <name type="ordered locus">CbuK_1203</name>
</gene>
<protein>
    <recommendedName>
        <fullName evidence="1">Ribonuclease HII</fullName>
        <shortName evidence="1">RNase HII</shortName>
        <ecNumber evidence="1">3.1.26.4</ecNumber>
    </recommendedName>
</protein>
<sequence>MDAPFAKTPSNLLIAGVDEAGRGPLAGPVITAAVILNPEIIIEGLADSKKLSLKKREELYEKIITNCKAFAIARADVEEIDRLNIFRATLLAMQRAINQLSIQPDKVLIDGHCCPDLPYETQAIVQGDQNVPAISAASILAKVTRDREMLKYDAQYPDYGFAIHKGYGTKAHLAAIHRFGITPVHRKSFEPVRQLKLFIPEE</sequence>
<feature type="chain" id="PRO_1000091617" description="Ribonuclease HII">
    <location>
        <begin position="1"/>
        <end position="202"/>
    </location>
</feature>
<feature type="domain" description="RNase H type-2" evidence="2">
    <location>
        <begin position="12"/>
        <end position="201"/>
    </location>
</feature>
<feature type="binding site" evidence="1">
    <location>
        <position position="18"/>
    </location>
    <ligand>
        <name>a divalent metal cation</name>
        <dbReference type="ChEBI" id="CHEBI:60240"/>
    </ligand>
</feature>
<feature type="binding site" evidence="1">
    <location>
        <position position="19"/>
    </location>
    <ligand>
        <name>a divalent metal cation</name>
        <dbReference type="ChEBI" id="CHEBI:60240"/>
    </ligand>
</feature>
<feature type="binding site" evidence="1">
    <location>
        <position position="110"/>
    </location>
    <ligand>
        <name>a divalent metal cation</name>
        <dbReference type="ChEBI" id="CHEBI:60240"/>
    </ligand>
</feature>
<proteinExistence type="inferred from homology"/>
<reference key="1">
    <citation type="journal article" date="2009" name="Infect. Immun.">
        <title>Comparative genomics reveal extensive transposon-mediated genomic plasticity and diversity among potential effector proteins within the genus Coxiella.</title>
        <authorList>
            <person name="Beare P.A."/>
            <person name="Unsworth N."/>
            <person name="Andoh M."/>
            <person name="Voth D.E."/>
            <person name="Omsland A."/>
            <person name="Gilk S.D."/>
            <person name="Williams K.P."/>
            <person name="Sobral B.W."/>
            <person name="Kupko J.J. III"/>
            <person name="Porcella S.F."/>
            <person name="Samuel J.E."/>
            <person name="Heinzen R.A."/>
        </authorList>
    </citation>
    <scope>NUCLEOTIDE SEQUENCE [LARGE SCALE GENOMIC DNA]</scope>
    <source>
        <strain>CbuK_Q154</strain>
    </source>
</reference>
<organism>
    <name type="scientific">Coxiella burnetii (strain CbuK_Q154)</name>
    <name type="common">Coxiella burnetii (strain Q154)</name>
    <dbReference type="NCBI Taxonomy" id="434924"/>
    <lineage>
        <taxon>Bacteria</taxon>
        <taxon>Pseudomonadati</taxon>
        <taxon>Pseudomonadota</taxon>
        <taxon>Gammaproteobacteria</taxon>
        <taxon>Legionellales</taxon>
        <taxon>Coxiellaceae</taxon>
        <taxon>Coxiella</taxon>
    </lineage>
</organism>
<accession>B6J7Z2</accession>
<dbReference type="EC" id="3.1.26.4" evidence="1"/>
<dbReference type="EMBL" id="CP001020">
    <property type="protein sequence ID" value="ACJ20391.1"/>
    <property type="molecule type" value="Genomic_DNA"/>
</dbReference>
<dbReference type="RefSeq" id="WP_005770967.1">
    <property type="nucleotide sequence ID" value="NC_011528.1"/>
</dbReference>
<dbReference type="SMR" id="B6J7Z2"/>
<dbReference type="KEGG" id="cbc:CbuK_1203"/>
<dbReference type="HOGENOM" id="CLU_036532_3_2_6"/>
<dbReference type="GO" id="GO:0005737">
    <property type="term" value="C:cytoplasm"/>
    <property type="evidence" value="ECO:0007669"/>
    <property type="project" value="UniProtKB-SubCell"/>
</dbReference>
<dbReference type="GO" id="GO:0032299">
    <property type="term" value="C:ribonuclease H2 complex"/>
    <property type="evidence" value="ECO:0007669"/>
    <property type="project" value="TreeGrafter"/>
</dbReference>
<dbReference type="GO" id="GO:0030145">
    <property type="term" value="F:manganese ion binding"/>
    <property type="evidence" value="ECO:0007669"/>
    <property type="project" value="UniProtKB-UniRule"/>
</dbReference>
<dbReference type="GO" id="GO:0003723">
    <property type="term" value="F:RNA binding"/>
    <property type="evidence" value="ECO:0007669"/>
    <property type="project" value="InterPro"/>
</dbReference>
<dbReference type="GO" id="GO:0004523">
    <property type="term" value="F:RNA-DNA hybrid ribonuclease activity"/>
    <property type="evidence" value="ECO:0007669"/>
    <property type="project" value="UniProtKB-UniRule"/>
</dbReference>
<dbReference type="GO" id="GO:0043137">
    <property type="term" value="P:DNA replication, removal of RNA primer"/>
    <property type="evidence" value="ECO:0007669"/>
    <property type="project" value="TreeGrafter"/>
</dbReference>
<dbReference type="GO" id="GO:0006298">
    <property type="term" value="P:mismatch repair"/>
    <property type="evidence" value="ECO:0007669"/>
    <property type="project" value="TreeGrafter"/>
</dbReference>
<dbReference type="CDD" id="cd07182">
    <property type="entry name" value="RNase_HII_bacteria_HII_like"/>
    <property type="match status" value="1"/>
</dbReference>
<dbReference type="FunFam" id="3.30.420.10:FF:000006">
    <property type="entry name" value="Ribonuclease HII"/>
    <property type="match status" value="1"/>
</dbReference>
<dbReference type="Gene3D" id="3.30.420.10">
    <property type="entry name" value="Ribonuclease H-like superfamily/Ribonuclease H"/>
    <property type="match status" value="1"/>
</dbReference>
<dbReference type="HAMAP" id="MF_00052_B">
    <property type="entry name" value="RNase_HII_B"/>
    <property type="match status" value="1"/>
</dbReference>
<dbReference type="InterPro" id="IPR022898">
    <property type="entry name" value="RNase_HII"/>
</dbReference>
<dbReference type="InterPro" id="IPR001352">
    <property type="entry name" value="RNase_HII/HIII"/>
</dbReference>
<dbReference type="InterPro" id="IPR024567">
    <property type="entry name" value="RNase_HII/HIII_dom"/>
</dbReference>
<dbReference type="InterPro" id="IPR012337">
    <property type="entry name" value="RNaseH-like_sf"/>
</dbReference>
<dbReference type="InterPro" id="IPR036397">
    <property type="entry name" value="RNaseH_sf"/>
</dbReference>
<dbReference type="NCBIfam" id="NF000594">
    <property type="entry name" value="PRK00015.1-1"/>
    <property type="match status" value="1"/>
</dbReference>
<dbReference type="NCBIfam" id="NF000595">
    <property type="entry name" value="PRK00015.1-3"/>
    <property type="match status" value="1"/>
</dbReference>
<dbReference type="NCBIfam" id="NF000596">
    <property type="entry name" value="PRK00015.1-4"/>
    <property type="match status" value="1"/>
</dbReference>
<dbReference type="PANTHER" id="PTHR10954">
    <property type="entry name" value="RIBONUCLEASE H2 SUBUNIT A"/>
    <property type="match status" value="1"/>
</dbReference>
<dbReference type="PANTHER" id="PTHR10954:SF18">
    <property type="entry name" value="RIBONUCLEASE HII"/>
    <property type="match status" value="1"/>
</dbReference>
<dbReference type="Pfam" id="PF01351">
    <property type="entry name" value="RNase_HII"/>
    <property type="match status" value="1"/>
</dbReference>
<dbReference type="SUPFAM" id="SSF53098">
    <property type="entry name" value="Ribonuclease H-like"/>
    <property type="match status" value="1"/>
</dbReference>
<dbReference type="PROSITE" id="PS51975">
    <property type="entry name" value="RNASE_H_2"/>
    <property type="match status" value="1"/>
</dbReference>
<name>RNH2_COXB1</name>